<protein>
    <recommendedName>
        <fullName evidence="6">ABC transporter G family member 44</fullName>
        <shortName evidence="6">OsABCG44</shortName>
    </recommendedName>
    <alternativeName>
        <fullName evidence="5">Pleiotropic drug resistance protein 17</fullName>
        <shortName evidence="5">OsPDR17</shortName>
    </alternativeName>
</protein>
<dbReference type="EMBL" id="AP005795">
    <property type="protein sequence ID" value="BAD05827.1"/>
    <property type="status" value="ALT_SEQ"/>
    <property type="molecule type" value="Genomic_DNA"/>
</dbReference>
<dbReference type="EMBL" id="AP008214">
    <property type="protein sequence ID" value="BAF23616.1"/>
    <property type="status" value="ALT_SEQ"/>
    <property type="molecule type" value="Genomic_DNA"/>
</dbReference>
<dbReference type="EMBL" id="AP014964">
    <property type="status" value="NOT_ANNOTATED_CDS"/>
    <property type="molecule type" value="Genomic_DNA"/>
</dbReference>
<dbReference type="EMBL" id="AK100858">
    <property type="status" value="NOT_ANNOTATED_CDS"/>
    <property type="molecule type" value="mRNA"/>
</dbReference>
<dbReference type="RefSeq" id="XP_015650488.1">
    <property type="nucleotide sequence ID" value="XM_015795002.1"/>
</dbReference>
<dbReference type="SMR" id="Q6YW62"/>
<dbReference type="FunCoup" id="Q6YW62">
    <property type="interactions" value="111"/>
</dbReference>
<dbReference type="STRING" id="39947.Q6YW62"/>
<dbReference type="PaxDb" id="39947-Q6YW62"/>
<dbReference type="KEGG" id="dosa:Os08g0384500"/>
<dbReference type="eggNOG" id="KOG0065">
    <property type="taxonomic scope" value="Eukaryota"/>
</dbReference>
<dbReference type="InParanoid" id="Q6YW62"/>
<dbReference type="OrthoDB" id="66620at2759"/>
<dbReference type="Proteomes" id="UP000000763">
    <property type="component" value="Chromosome 8"/>
</dbReference>
<dbReference type="Proteomes" id="UP000059680">
    <property type="component" value="Chromosome 8"/>
</dbReference>
<dbReference type="GO" id="GO:0016020">
    <property type="term" value="C:membrane"/>
    <property type="evidence" value="ECO:0007669"/>
    <property type="project" value="UniProtKB-SubCell"/>
</dbReference>
<dbReference type="GO" id="GO:0140359">
    <property type="term" value="F:ABC-type transporter activity"/>
    <property type="evidence" value="ECO:0007669"/>
    <property type="project" value="InterPro"/>
</dbReference>
<dbReference type="GO" id="GO:0005524">
    <property type="term" value="F:ATP binding"/>
    <property type="evidence" value="ECO:0007669"/>
    <property type="project" value="UniProtKB-KW"/>
</dbReference>
<dbReference type="GO" id="GO:0016887">
    <property type="term" value="F:ATP hydrolysis activity"/>
    <property type="evidence" value="ECO:0007669"/>
    <property type="project" value="InterPro"/>
</dbReference>
<dbReference type="CDD" id="cd03232">
    <property type="entry name" value="ABCG_PDR_domain2"/>
    <property type="match status" value="1"/>
</dbReference>
<dbReference type="FunFam" id="3.40.50.300:FF:000179">
    <property type="entry name" value="ABC transporter G family member 34"/>
    <property type="match status" value="1"/>
</dbReference>
<dbReference type="FunFam" id="3.40.50.300:FF:000059">
    <property type="entry name" value="ABC transporter G family member 40"/>
    <property type="match status" value="1"/>
</dbReference>
<dbReference type="Gene3D" id="3.40.50.300">
    <property type="entry name" value="P-loop containing nucleotide triphosphate hydrolases"/>
    <property type="match status" value="2"/>
</dbReference>
<dbReference type="InterPro" id="IPR003593">
    <property type="entry name" value="AAA+_ATPase"/>
</dbReference>
<dbReference type="InterPro" id="IPR013525">
    <property type="entry name" value="ABC2_TM"/>
</dbReference>
<dbReference type="InterPro" id="IPR003439">
    <property type="entry name" value="ABC_transporter-like_ATP-bd"/>
</dbReference>
<dbReference type="InterPro" id="IPR043926">
    <property type="entry name" value="ABCG_dom"/>
</dbReference>
<dbReference type="InterPro" id="IPR034003">
    <property type="entry name" value="ABCG_PDR_2"/>
</dbReference>
<dbReference type="InterPro" id="IPR027417">
    <property type="entry name" value="P-loop_NTPase"/>
</dbReference>
<dbReference type="InterPro" id="IPR013581">
    <property type="entry name" value="PDR_assoc"/>
</dbReference>
<dbReference type="PANTHER" id="PTHR48040:SF35">
    <property type="entry name" value="ABC TRANSPORTER G FAMILY MEMBER 39-LIKE"/>
    <property type="match status" value="1"/>
</dbReference>
<dbReference type="PANTHER" id="PTHR48040">
    <property type="entry name" value="PLEIOTROPIC DRUG RESISTANCE PROTEIN 1-LIKE ISOFORM X1"/>
    <property type="match status" value="1"/>
</dbReference>
<dbReference type="Pfam" id="PF01061">
    <property type="entry name" value="ABC2_membrane"/>
    <property type="match status" value="2"/>
</dbReference>
<dbReference type="Pfam" id="PF19055">
    <property type="entry name" value="ABC2_membrane_7"/>
    <property type="match status" value="1"/>
</dbReference>
<dbReference type="Pfam" id="PF00005">
    <property type="entry name" value="ABC_tran"/>
    <property type="match status" value="2"/>
</dbReference>
<dbReference type="Pfam" id="PF08370">
    <property type="entry name" value="PDR_assoc"/>
    <property type="match status" value="1"/>
</dbReference>
<dbReference type="SMART" id="SM00382">
    <property type="entry name" value="AAA"/>
    <property type="match status" value="2"/>
</dbReference>
<dbReference type="SUPFAM" id="SSF52540">
    <property type="entry name" value="P-loop containing nucleoside triphosphate hydrolases"/>
    <property type="match status" value="2"/>
</dbReference>
<dbReference type="PROSITE" id="PS50893">
    <property type="entry name" value="ABC_TRANSPORTER_2"/>
    <property type="match status" value="2"/>
</dbReference>
<evidence type="ECO:0000250" key="1"/>
<evidence type="ECO:0000255" key="2"/>
<evidence type="ECO:0000255" key="3">
    <source>
        <dbReference type="PROSITE-ProRule" id="PRU00434"/>
    </source>
</evidence>
<evidence type="ECO:0000256" key="4">
    <source>
        <dbReference type="SAM" id="MobiDB-lite"/>
    </source>
</evidence>
<evidence type="ECO:0000303" key="5">
    <source>
    </source>
</evidence>
<evidence type="ECO:0000303" key="6">
    <source>
    </source>
</evidence>
<evidence type="ECO:0000305" key="7"/>
<evidence type="ECO:0000312" key="8">
    <source>
        <dbReference type="EMBL" id="BAD05827.1"/>
    </source>
</evidence>
<evidence type="ECO:0000312" key="9">
    <source>
        <dbReference type="EMBL" id="BAF23616.1"/>
    </source>
</evidence>
<proteinExistence type="evidence at transcript level"/>
<organism>
    <name type="scientific">Oryza sativa subsp. japonica</name>
    <name type="common">Rice</name>
    <dbReference type="NCBI Taxonomy" id="39947"/>
    <lineage>
        <taxon>Eukaryota</taxon>
        <taxon>Viridiplantae</taxon>
        <taxon>Streptophyta</taxon>
        <taxon>Embryophyta</taxon>
        <taxon>Tracheophyta</taxon>
        <taxon>Spermatophyta</taxon>
        <taxon>Magnoliopsida</taxon>
        <taxon>Liliopsida</taxon>
        <taxon>Poales</taxon>
        <taxon>Poaceae</taxon>
        <taxon>BOP clade</taxon>
        <taxon>Oryzoideae</taxon>
        <taxon>Oryzeae</taxon>
        <taxon>Oryzinae</taxon>
        <taxon>Oryza</taxon>
        <taxon>Oryza sativa</taxon>
    </lineage>
</organism>
<comment type="function">
    <text evidence="1">May be a general defense protein.</text>
</comment>
<comment type="subcellular location">
    <subcellularLocation>
        <location evidence="2">Membrane</location>
        <topology evidence="2">Multi-pass membrane protein</topology>
    </subcellularLocation>
</comment>
<comment type="similarity">
    <text evidence="7">Belongs to the ABC transporter superfamily. ABCG family. PDR (TC 3.A.1.205) subfamily.</text>
</comment>
<comment type="sequence caution" evidence="7">
    <conflict type="erroneous gene model prediction">
        <sequence resource="EMBL-CDS" id="BAD05827"/>
    </conflict>
</comment>
<comment type="sequence caution" evidence="7">
    <conflict type="erroneous gene model prediction">
        <sequence resource="EMBL-CDS" id="BAF23616"/>
    </conflict>
</comment>
<keyword id="KW-0067">ATP-binding</keyword>
<keyword id="KW-0472">Membrane</keyword>
<keyword id="KW-0547">Nucleotide-binding</keyword>
<keyword id="KW-1185">Reference proteome</keyword>
<keyword id="KW-0677">Repeat</keyword>
<keyword id="KW-0812">Transmembrane</keyword>
<keyword id="KW-1133">Transmembrane helix</keyword>
<keyword id="KW-0813">Transport</keyword>
<sequence>MDTGEAAFGVASLRLRGSMASASSRRAPSYRDYDVFSIASSSRAEAEDDEEALKWAALEKLPTHARVRKGIVAAADDGQGSGAAGEVVDVAGLGFQERKHLLERLVRVAEEDHESFLLKLKQRIDRVGLDFPTIEVRYEHLSIDALAHVGSRGLPTFLNTTLNSLESLANLLHVVPNKKRPLNILHDVHGVIKPRRMTLLLGPPGSGKTTLLLALAGKLGSDLKVSGKVTYNGYGMDEFVAQRSAAYISQHDLHIPEMTVRETLAFSARCQGVGTRYDMLTELARREKAANIKPDPDLDVYMKAISVGGQETNIITDYVLKILGLDICADTIVGNEMLRGISGGQRKRVTTGEMIVGPARAMFMDEISTGLDSSTTFQIVKSLGQITSILGGTTVISLLQPAPETYNLFDDIILLSDGHIVYQGPREHVLEFFESMGFKCPDRKGVADFLQEVTSRKDQQQYWARTHQPYRYIPVQEFACAFQSFHVGQTLSDELSHPFDKSTSHPASLTTSTYGASKLELLRTCIARELLLMKRNMFVYRFRAFQLLVITIIVMTLFLRTNMHHETRTDGIVYLGALFFAMVAHMFNGFSELAMATIKLPVFFKQRDYLFFPSWAYTIPTWILKIPISCFEVAITVFLSYYVIGFDPNVGRLFKQYLLLLLVNQMAAALFRFIAALGRTMVVANTLASFALLVLLVLSGFILSHHDVKKWWIWGYWISPLQYAMNAIAVNEFLGHKWNRLVQGTNTTLGIEVLKSRGMFTEAKWYWIGVGALFGYVIVFNILFTIALGYLKPSGKAQQILSEEALKEKHANITGETINDPRNSASSGQTTNTRRNAAPGEASENRRGMVLPFAPLAVAFNNIRYSVDMPPEMKAQGVDQDRLLLLKGVSGSFRPGVLTALMGVSGAGKTTLMDVLAGRKTGGYIEGDISISGYPKKQETFARVSGYCEQNDIHSPNVTVYESLAYSAWLRLPSDVDSETRKMFIEQVMELVELNPLRDALVGLPGVNGLSTEQRKRLTIAVELVANPSIIFMDEPTSGLDARAAAIVMRTVRNTVDTGRTVVCTIHQPSIDIFEAFDELFLMKRGGEEIYVGPLGHHSCDLIEYFEGVEGVSKIKPGYNPATWMLEVTTLAQEDVLGISFTDVYKNSDLYQRNQSLIKGISRPPQGSKDLFFPTQFSQSFSTQCMACLWKQNLSYWRNPPYTVVRFFFSLIVALMFGTIFWRLGSKRSRQQDLFNAMGSMYAAVLFMGISYSSSVQPVVAVERTVFYRERAAGMYSALPYAFGQVVVELPYVLVQSAVYGVIVYAMIGFEWEAKKFFWYLYFMYFTLLYFTFYGMLAVGLTPSYNIASIVSSFFYGIWNLFSGFVIPRPSMPVWWRWYSWACPVSWTLYGLVASQFGDLKEPLRDTGVPIDVFLREYFGFKHDFLGVVAVAVAGFATLFAVSFSLSIKMLNFQRR</sequence>
<reference key="1">
    <citation type="journal article" date="2005" name="Nature">
        <title>The map-based sequence of the rice genome.</title>
        <authorList>
            <consortium name="International rice genome sequencing project (IRGSP)"/>
        </authorList>
    </citation>
    <scope>NUCLEOTIDE SEQUENCE [LARGE SCALE GENOMIC DNA]</scope>
    <source>
        <strain>cv. Nipponbare</strain>
    </source>
</reference>
<reference key="2">
    <citation type="journal article" date="2008" name="Nucleic Acids Res.">
        <title>The rice annotation project database (RAP-DB): 2008 update.</title>
        <authorList>
            <consortium name="The rice annotation project (RAP)"/>
        </authorList>
    </citation>
    <scope>GENOME REANNOTATION</scope>
    <source>
        <strain>cv. Nipponbare</strain>
    </source>
</reference>
<reference key="3">
    <citation type="journal article" date="2013" name="Rice">
        <title>Improvement of the Oryza sativa Nipponbare reference genome using next generation sequence and optical map data.</title>
        <authorList>
            <person name="Kawahara Y."/>
            <person name="de la Bastide M."/>
            <person name="Hamilton J.P."/>
            <person name="Kanamori H."/>
            <person name="McCombie W.R."/>
            <person name="Ouyang S."/>
            <person name="Schwartz D.C."/>
            <person name="Tanaka T."/>
            <person name="Wu J."/>
            <person name="Zhou S."/>
            <person name="Childs K.L."/>
            <person name="Davidson R.M."/>
            <person name="Lin H."/>
            <person name="Quesada-Ocampo L."/>
            <person name="Vaillancourt B."/>
            <person name="Sakai H."/>
            <person name="Lee S.S."/>
            <person name="Kim J."/>
            <person name="Numa H."/>
            <person name="Itoh T."/>
            <person name="Buell C.R."/>
            <person name="Matsumoto T."/>
        </authorList>
    </citation>
    <scope>GENOME REANNOTATION</scope>
    <source>
        <strain>cv. Nipponbare</strain>
    </source>
</reference>
<reference key="4">
    <citation type="journal article" date="2003" name="Science">
        <title>Collection, mapping, and annotation of over 28,000 cDNA clones from japonica rice.</title>
        <authorList>
            <consortium name="The rice full-length cDNA consortium"/>
        </authorList>
    </citation>
    <scope>NUCLEOTIDE SEQUENCE [LARGE SCALE MRNA] OF 694-1456</scope>
    <source>
        <strain>cv. Nipponbare</strain>
    </source>
</reference>
<reference key="5">
    <citation type="journal article" date="2006" name="FEBS Lett.">
        <title>Organization and function of the plant pleiotropic drug resistance ABC transporter family.</title>
        <authorList>
            <person name="Crouzet J."/>
            <person name="Trombik T."/>
            <person name="Fraysse A.S."/>
            <person name="Boutry M."/>
        </authorList>
    </citation>
    <scope>GENE FAMILY</scope>
    <scope>NOMENCLATURE</scope>
</reference>
<reference key="6">
    <citation type="journal article" date="2008" name="Trends Plant Sci.">
        <title>Plant ABC proteins - a unified nomenclature and updated inventory.</title>
        <authorList>
            <person name="Verrier P.J."/>
            <person name="Bird D."/>
            <person name="Burla B."/>
            <person name="Dassa E."/>
            <person name="Forestier C."/>
            <person name="Geisler M."/>
            <person name="Klein M."/>
            <person name="Kolukisaoglu H.U."/>
            <person name="Lee Y."/>
            <person name="Martinoia E."/>
            <person name="Murphy A."/>
            <person name="Rea P.A."/>
            <person name="Samuels L."/>
            <person name="Schulz B."/>
            <person name="Spalding E.J."/>
            <person name="Yazaki K."/>
            <person name="Theodoulou F.L."/>
        </authorList>
    </citation>
    <scope>GENE FAMILY</scope>
    <scope>NOMENCLATURE</scope>
</reference>
<feature type="chain" id="PRO_0000433454" description="ABC transporter G family member 44">
    <location>
        <begin position="1"/>
        <end position="1456"/>
    </location>
</feature>
<feature type="transmembrane region" description="Helical" evidence="2">
    <location>
        <begin position="538"/>
        <end position="558"/>
    </location>
</feature>
<feature type="transmembrane region" description="Helical" evidence="2">
    <location>
        <begin position="571"/>
        <end position="591"/>
    </location>
</feature>
<feature type="transmembrane region" description="Helical" evidence="2">
    <location>
        <begin position="626"/>
        <end position="646"/>
    </location>
</feature>
<feature type="transmembrane region" description="Helical" evidence="2">
    <location>
        <begin position="658"/>
        <end position="678"/>
    </location>
</feature>
<feature type="transmembrane region" description="Helical" evidence="2">
    <location>
        <begin position="682"/>
        <end position="702"/>
    </location>
</feature>
<feature type="transmembrane region" description="Helical" evidence="2">
    <location>
        <begin position="768"/>
        <end position="788"/>
    </location>
</feature>
<feature type="transmembrane region" description="Helical" evidence="2">
    <location>
        <begin position="1202"/>
        <end position="1222"/>
    </location>
</feature>
<feature type="transmembrane region" description="Helical" evidence="2">
    <location>
        <begin position="1242"/>
        <end position="1262"/>
    </location>
</feature>
<feature type="transmembrane region" description="Helical" evidence="2">
    <location>
        <begin position="1290"/>
        <end position="1310"/>
    </location>
</feature>
<feature type="transmembrane region" description="Helical" evidence="2">
    <location>
        <begin position="1317"/>
        <end position="1337"/>
    </location>
</feature>
<feature type="transmembrane region" description="Helical" evidence="2">
    <location>
        <begin position="1347"/>
        <end position="1367"/>
    </location>
</feature>
<feature type="transmembrane region" description="Helical" evidence="2">
    <location>
        <begin position="1378"/>
        <end position="1398"/>
    </location>
</feature>
<feature type="transmembrane region" description="Helical" evidence="2">
    <location>
        <begin position="1425"/>
        <end position="1445"/>
    </location>
</feature>
<feature type="domain" description="ABC transporter 1" evidence="3">
    <location>
        <begin position="169"/>
        <end position="442"/>
    </location>
</feature>
<feature type="domain" description="ABC transmembrane type-2 1" evidence="7">
    <location>
        <begin position="520"/>
        <end position="733"/>
    </location>
</feature>
<feature type="domain" description="ABC transporter 2" evidence="3">
    <location>
        <begin position="858"/>
        <end position="1110"/>
    </location>
</feature>
<feature type="domain" description="ABC transmembrane type-2 2" evidence="7">
    <location>
        <begin position="1183"/>
        <end position="1397"/>
    </location>
</feature>
<feature type="region of interest" description="Disordered" evidence="4">
    <location>
        <begin position="812"/>
        <end position="844"/>
    </location>
</feature>
<feature type="compositionally biased region" description="Polar residues" evidence="4">
    <location>
        <begin position="814"/>
        <end position="835"/>
    </location>
</feature>
<feature type="binding site" evidence="3">
    <location>
        <begin position="202"/>
        <end position="209"/>
    </location>
    <ligand>
        <name>ATP</name>
        <dbReference type="ChEBI" id="CHEBI:30616"/>
        <label>1</label>
    </ligand>
</feature>
<feature type="binding site" evidence="3">
    <location>
        <begin position="903"/>
        <end position="910"/>
    </location>
    <ligand>
        <name>ATP</name>
        <dbReference type="ChEBI" id="CHEBI:30616"/>
        <label>2</label>
    </ligand>
</feature>
<gene>
    <name evidence="6" type="primary">ABCG44</name>
    <name evidence="5" type="synonym">PDR17</name>
    <name evidence="9" type="ordered locus">Os08g0384500</name>
    <name type="ordered locus">LOC_Os08g29570</name>
    <name evidence="8" type="ORF">B1090H08.39</name>
</gene>
<accession>Q6YW62</accession>
<accession>Q0J5Z9</accession>
<name>AB44G_ORYSJ</name>